<reference key="1">
    <citation type="submission" date="2006-12" db="EMBL/GenBank/DDBJ databases">
        <title>Complete sequence of Shewanella amazonensis SB2B.</title>
        <authorList>
            <consortium name="US DOE Joint Genome Institute"/>
            <person name="Copeland A."/>
            <person name="Lucas S."/>
            <person name="Lapidus A."/>
            <person name="Barry K."/>
            <person name="Detter J.C."/>
            <person name="Glavina del Rio T."/>
            <person name="Hammon N."/>
            <person name="Israni S."/>
            <person name="Dalin E."/>
            <person name="Tice H."/>
            <person name="Pitluck S."/>
            <person name="Munk A.C."/>
            <person name="Brettin T."/>
            <person name="Bruce D."/>
            <person name="Han C."/>
            <person name="Tapia R."/>
            <person name="Gilna P."/>
            <person name="Schmutz J."/>
            <person name="Larimer F."/>
            <person name="Land M."/>
            <person name="Hauser L."/>
            <person name="Kyrpides N."/>
            <person name="Mikhailova N."/>
            <person name="Fredrickson J."/>
            <person name="Richardson P."/>
        </authorList>
    </citation>
    <scope>NUCLEOTIDE SEQUENCE [LARGE SCALE GENOMIC DNA]</scope>
    <source>
        <strain>ATCC BAA-1098 / SB2B</strain>
    </source>
</reference>
<organism>
    <name type="scientific">Shewanella amazonensis (strain ATCC BAA-1098 / SB2B)</name>
    <dbReference type="NCBI Taxonomy" id="326297"/>
    <lineage>
        <taxon>Bacteria</taxon>
        <taxon>Pseudomonadati</taxon>
        <taxon>Pseudomonadota</taxon>
        <taxon>Gammaproteobacteria</taxon>
        <taxon>Alteromonadales</taxon>
        <taxon>Shewanellaceae</taxon>
        <taxon>Shewanella</taxon>
    </lineage>
</organism>
<protein>
    <recommendedName>
        <fullName evidence="1">ATP-dependent Clp protease adapter protein ClpS</fullName>
    </recommendedName>
</protein>
<proteinExistence type="inferred from homology"/>
<accession>A1S7A6</accession>
<gene>
    <name evidence="1" type="primary">clpS</name>
    <name type="ordered locus">Sama_2057</name>
</gene>
<evidence type="ECO:0000255" key="1">
    <source>
        <dbReference type="HAMAP-Rule" id="MF_00302"/>
    </source>
</evidence>
<dbReference type="EMBL" id="CP000507">
    <property type="protein sequence ID" value="ABM00263.1"/>
    <property type="molecule type" value="Genomic_DNA"/>
</dbReference>
<dbReference type="RefSeq" id="WP_011760170.1">
    <property type="nucleotide sequence ID" value="NC_008700.1"/>
</dbReference>
<dbReference type="SMR" id="A1S7A6"/>
<dbReference type="STRING" id="326297.Sama_2057"/>
<dbReference type="KEGG" id="saz:Sama_2057"/>
<dbReference type="eggNOG" id="COG2127">
    <property type="taxonomic scope" value="Bacteria"/>
</dbReference>
<dbReference type="HOGENOM" id="CLU_134358_2_1_6"/>
<dbReference type="OrthoDB" id="9796121at2"/>
<dbReference type="Proteomes" id="UP000009175">
    <property type="component" value="Chromosome"/>
</dbReference>
<dbReference type="GO" id="GO:0030163">
    <property type="term" value="P:protein catabolic process"/>
    <property type="evidence" value="ECO:0007669"/>
    <property type="project" value="InterPro"/>
</dbReference>
<dbReference type="GO" id="GO:0006508">
    <property type="term" value="P:proteolysis"/>
    <property type="evidence" value="ECO:0007669"/>
    <property type="project" value="UniProtKB-UniRule"/>
</dbReference>
<dbReference type="FunFam" id="3.30.1390.10:FF:000002">
    <property type="entry name" value="ATP-dependent Clp protease adapter protein ClpS"/>
    <property type="match status" value="1"/>
</dbReference>
<dbReference type="Gene3D" id="3.30.1390.10">
    <property type="match status" value="1"/>
</dbReference>
<dbReference type="HAMAP" id="MF_00302">
    <property type="entry name" value="ClpS"/>
    <property type="match status" value="1"/>
</dbReference>
<dbReference type="InterPro" id="IPR022935">
    <property type="entry name" value="ClpS"/>
</dbReference>
<dbReference type="InterPro" id="IPR003769">
    <property type="entry name" value="ClpS_core"/>
</dbReference>
<dbReference type="InterPro" id="IPR014719">
    <property type="entry name" value="Ribosomal_bL12_C/ClpS-like"/>
</dbReference>
<dbReference type="NCBIfam" id="NF000670">
    <property type="entry name" value="PRK00033.1-3"/>
    <property type="match status" value="1"/>
</dbReference>
<dbReference type="NCBIfam" id="NF000672">
    <property type="entry name" value="PRK00033.1-5"/>
    <property type="match status" value="1"/>
</dbReference>
<dbReference type="PANTHER" id="PTHR33473:SF19">
    <property type="entry name" value="ATP-DEPENDENT CLP PROTEASE ADAPTER PROTEIN CLPS"/>
    <property type="match status" value="1"/>
</dbReference>
<dbReference type="PANTHER" id="PTHR33473">
    <property type="entry name" value="ATP-DEPENDENT CLP PROTEASE ADAPTER PROTEIN CLPS1, CHLOROPLASTIC"/>
    <property type="match status" value="1"/>
</dbReference>
<dbReference type="Pfam" id="PF02617">
    <property type="entry name" value="ClpS"/>
    <property type="match status" value="1"/>
</dbReference>
<dbReference type="SUPFAM" id="SSF54736">
    <property type="entry name" value="ClpS-like"/>
    <property type="match status" value="1"/>
</dbReference>
<feature type="chain" id="PRO_1000022622" description="ATP-dependent Clp protease adapter protein ClpS">
    <location>
        <begin position="1"/>
        <end position="102"/>
    </location>
</feature>
<keyword id="KW-1185">Reference proteome</keyword>
<name>CLPS_SHEAM</name>
<comment type="function">
    <text evidence="1">Involved in the modulation of the specificity of the ClpAP-mediated ATP-dependent protein degradation.</text>
</comment>
<comment type="subunit">
    <text evidence="1">Binds to the N-terminal domain of the chaperone ClpA.</text>
</comment>
<comment type="similarity">
    <text evidence="1">Belongs to the ClpS family.</text>
</comment>
<sequence>MAKAGNIERVVERADTELMPPSMYKVILNNDDYTPMDFVVEVLQLFFKMNEHQATEIMLQIHHQGKAVCGVFPFGIAETKVAQVNQFARQNQHPLLCSLEKA</sequence>